<dbReference type="EMBL" id="L43967">
    <property type="protein sequence ID" value="AAC71617.1"/>
    <property type="molecule type" value="Genomic_DNA"/>
</dbReference>
<dbReference type="EMBL" id="U01813">
    <property type="protein sequence ID" value="AAD12349.1"/>
    <property type="molecule type" value="Genomic_DNA"/>
</dbReference>
<dbReference type="PIR" id="A64243">
    <property type="entry name" value="A64243"/>
</dbReference>
<dbReference type="RefSeq" id="WP_009885633.1">
    <property type="nucleotide sequence ID" value="NC_000908.2"/>
</dbReference>
<dbReference type="SMR" id="P47629"/>
<dbReference type="STRING" id="243273.MG_389"/>
<dbReference type="GeneID" id="88282574"/>
<dbReference type="KEGG" id="mge:MG_389"/>
<dbReference type="eggNOG" id="ENOG5031ZAV">
    <property type="taxonomic scope" value="Bacteria"/>
</dbReference>
<dbReference type="HOGENOM" id="CLU_1968086_0_0_14"/>
<dbReference type="InParanoid" id="P47629"/>
<dbReference type="OrthoDB" id="9967567at2"/>
<dbReference type="BioCyc" id="MGEN243273:G1GJ2-485-MONOMER"/>
<dbReference type="Proteomes" id="UP000000807">
    <property type="component" value="Chromosome"/>
</dbReference>
<dbReference type="GO" id="GO:0016020">
    <property type="term" value="C:membrane"/>
    <property type="evidence" value="ECO:0007669"/>
    <property type="project" value="UniProtKB-SubCell"/>
</dbReference>
<keyword id="KW-0472">Membrane</keyword>
<keyword id="KW-1185">Reference proteome</keyword>
<keyword id="KW-0812">Transmembrane</keyword>
<keyword id="KW-1133">Transmembrane helix</keyword>
<name>Y389_MYCGE</name>
<gene>
    <name type="ordered locus">MG389</name>
</gene>
<proteinExistence type="predicted"/>
<accession>P47629</accession>
<comment type="subcellular location">
    <subcellularLocation>
        <location evidence="2">Membrane</location>
        <topology evidence="2">Single-pass membrane protein</topology>
    </subcellularLocation>
</comment>
<feature type="chain" id="PRO_0000210590" description="Uncharacterized protein MG389">
    <location>
        <begin position="1"/>
        <end position="127"/>
    </location>
</feature>
<feature type="transmembrane region" description="Helical" evidence="1">
    <location>
        <begin position="5"/>
        <end position="25"/>
    </location>
</feature>
<protein>
    <recommendedName>
        <fullName>Uncharacterized protein MG389</fullName>
    </recommendedName>
</protein>
<reference key="1">
    <citation type="journal article" date="1995" name="Science">
        <title>The minimal gene complement of Mycoplasma genitalium.</title>
        <authorList>
            <person name="Fraser C.M."/>
            <person name="Gocayne J.D."/>
            <person name="White O."/>
            <person name="Adams M.D."/>
            <person name="Clayton R.A."/>
            <person name="Fleischmann R.D."/>
            <person name="Bult C.J."/>
            <person name="Kerlavage A.R."/>
            <person name="Sutton G.G."/>
            <person name="Kelley J.M."/>
            <person name="Fritchman J.L."/>
            <person name="Weidman J.F."/>
            <person name="Small K.V."/>
            <person name="Sandusky M."/>
            <person name="Fuhrmann J.L."/>
            <person name="Nguyen D.T."/>
            <person name="Utterback T.R."/>
            <person name="Saudek D.M."/>
            <person name="Phillips C.A."/>
            <person name="Merrick J.M."/>
            <person name="Tomb J.-F."/>
            <person name="Dougherty B.A."/>
            <person name="Bott K.F."/>
            <person name="Hu P.-C."/>
            <person name="Lucier T.S."/>
            <person name="Peterson S.N."/>
            <person name="Smith H.O."/>
            <person name="Hutchison C.A. III"/>
            <person name="Venter J.C."/>
        </authorList>
    </citation>
    <scope>NUCLEOTIDE SEQUENCE [LARGE SCALE GENOMIC DNA]</scope>
    <source>
        <strain>ATCC 33530 / DSM 19775 / NCTC 10195 / G37</strain>
    </source>
</reference>
<reference key="2">
    <citation type="journal article" date="1993" name="J. Bacteriol.">
        <title>A survey of the Mycoplasma genitalium genome by using random sequencing.</title>
        <authorList>
            <person name="Peterson S.N."/>
            <person name="Hu P.-C."/>
            <person name="Bott K.F."/>
            <person name="Hutchison C.A. III"/>
        </authorList>
    </citation>
    <scope>NUCLEOTIDE SEQUENCE [GENOMIC DNA] OF 44-106</scope>
    <source>
        <strain>ATCC 33530 / DSM 19775 / NCTC 10195 / G37</strain>
    </source>
</reference>
<evidence type="ECO:0000255" key="1"/>
<evidence type="ECO:0000305" key="2"/>
<organism>
    <name type="scientific">Mycoplasma genitalium (strain ATCC 33530 / DSM 19775 / NCTC 10195 / G37)</name>
    <name type="common">Mycoplasmoides genitalium</name>
    <dbReference type="NCBI Taxonomy" id="243273"/>
    <lineage>
        <taxon>Bacteria</taxon>
        <taxon>Bacillati</taxon>
        <taxon>Mycoplasmatota</taxon>
        <taxon>Mycoplasmoidales</taxon>
        <taxon>Mycoplasmoidaceae</taxon>
        <taxon>Mycoplasmoides</taxon>
    </lineage>
</organism>
<sequence>MKQKILGITIAFIILLLTTVAILFSVKVKQYLNVNLWTTQQQNFLMFKNEKDENLFNNVSWTNFQAETTEKSAKKAFRLYKKKISTSEISSELNKNLVKVDLSVTLEQGWYNITIMLPSKDLFEVIF</sequence>